<keyword id="KW-1003">Cell membrane</keyword>
<keyword id="KW-0472">Membrane</keyword>
<keyword id="KW-0614">Plasmid</keyword>
<keyword id="KW-0812">Transmembrane</keyword>
<keyword id="KW-1133">Transmembrane helix</keyword>
<evidence type="ECO:0000255" key="1"/>
<evidence type="ECO:0000305" key="2"/>
<proteinExistence type="predicted"/>
<geneLocation type="plasmid">
    <name>pIJ101</name>
</geneLocation>
<sequence>MRTPDAQMRAGHIPAHLIPDGTDPRTVVVVHHQAEARDWTGPILLALVAAGGSVGVVMTLCLLLQTAATTATALAAAAPAGVGLSISLKARKGK</sequence>
<feature type="chain" id="PRO_0000072114" description="Protein SpdA">
    <location>
        <begin position="1"/>
        <end position="94"/>
    </location>
</feature>
<feature type="transmembrane region" description="Helical" evidence="1">
    <location>
        <begin position="41"/>
        <end position="68"/>
    </location>
</feature>
<comment type="function">
    <text>Involved in plasmid transfer.</text>
</comment>
<comment type="subcellular location">
    <subcellularLocation>
        <location evidence="2">Cell membrane</location>
        <topology evidence="2">Single-pass membrane protein</topology>
    </subcellularLocation>
</comment>
<name>SPDA_STRLI</name>
<dbReference type="EMBL" id="M21778">
    <property type="protein sequence ID" value="AAA88409.1"/>
    <property type="molecule type" value="Genomic_DNA"/>
</dbReference>
<dbReference type="PIR" id="F31844">
    <property type="entry name" value="F31844"/>
</dbReference>
<dbReference type="RefSeq" id="NP_040446.1">
    <property type="nucleotide sequence ID" value="NC_001387.1"/>
</dbReference>
<dbReference type="RefSeq" id="WP_010889918.1">
    <property type="nucleotide sequence ID" value="NC_001387.1"/>
</dbReference>
<dbReference type="SMR" id="P22407"/>
<dbReference type="GO" id="GO:0005886">
    <property type="term" value="C:plasma membrane"/>
    <property type="evidence" value="ECO:0007669"/>
    <property type="project" value="UniProtKB-SubCell"/>
</dbReference>
<protein>
    <recommendedName>
        <fullName>Protein SpdA</fullName>
    </recommendedName>
</protein>
<reference key="1">
    <citation type="journal article" date="1988" name="J. Bacteriol.">
        <title>Complete nucleotide sequence of the Streptomyces lividans plasmid pIJ101 and correlation of the sequence with genetic properties.</title>
        <authorList>
            <person name="Kendall K.J."/>
            <person name="Cohen S.N."/>
        </authorList>
    </citation>
    <scope>NUCLEOTIDE SEQUENCE [GENOMIC DNA]</scope>
</reference>
<gene>
    <name type="primary">spdA</name>
</gene>
<accession>P22407</accession>
<organism>
    <name type="scientific">Streptomyces lividans</name>
    <dbReference type="NCBI Taxonomy" id="1916"/>
    <lineage>
        <taxon>Bacteria</taxon>
        <taxon>Bacillati</taxon>
        <taxon>Actinomycetota</taxon>
        <taxon>Actinomycetes</taxon>
        <taxon>Kitasatosporales</taxon>
        <taxon>Streptomycetaceae</taxon>
        <taxon>Streptomyces</taxon>
    </lineage>
</organism>